<evidence type="ECO:0000305" key="1"/>
<protein>
    <recommendedName>
        <fullName>UPF0215 protein PAE0952</fullName>
    </recommendedName>
</protein>
<organism>
    <name type="scientific">Pyrobaculum aerophilum (strain ATCC 51768 / DSM 7523 / JCM 9630 / CIP 104966 / NBRC 100827 / IM2)</name>
    <dbReference type="NCBI Taxonomy" id="178306"/>
    <lineage>
        <taxon>Archaea</taxon>
        <taxon>Thermoproteota</taxon>
        <taxon>Thermoprotei</taxon>
        <taxon>Thermoproteales</taxon>
        <taxon>Thermoproteaceae</taxon>
        <taxon>Pyrobaculum</taxon>
    </lineage>
</organism>
<comment type="similarity">
    <text evidence="1">Belongs to the UPF0215 family.</text>
</comment>
<reference key="1">
    <citation type="journal article" date="2002" name="Proc. Natl. Acad. Sci. U.S.A.">
        <title>Genome sequence of the hyperthermophilic crenarchaeon Pyrobaculum aerophilum.</title>
        <authorList>
            <person name="Fitz-Gibbon S.T."/>
            <person name="Ladner H."/>
            <person name="Kim U.-J."/>
            <person name="Stetter K.O."/>
            <person name="Simon M.I."/>
            <person name="Miller J.H."/>
        </authorList>
    </citation>
    <scope>NUCLEOTIDE SEQUENCE [LARGE SCALE GENOMIC DNA]</scope>
    <source>
        <strain>ATCC 51768 / DSM 7523 / JCM 9630 / CIP 104966 / NBRC 100827 / IM2</strain>
    </source>
</reference>
<gene>
    <name type="ordered locus">PAE0952</name>
</gene>
<proteinExistence type="inferred from homology"/>
<sequence length="187" mass="20751">MAIAESFQLSDGYSVYAGVRARRDGVVEDAAFALAKIGGTDGTSAASKILEALLRRDVSLVMLDGCIVSFYNWVDGEALYAKFKKPVACYVFEEPEGRVEEAVRKLFTDWEVRIEAIKKLGPPTVYYTKSGYKIYIRAWGIDPVDAGRAAEYCTGFGKIPEPLRVAKIIAGAARQFLKTLGKFRFLW</sequence>
<dbReference type="EMBL" id="AE009441">
    <property type="protein sequence ID" value="AAL63152.1"/>
    <property type="molecule type" value="Genomic_DNA"/>
</dbReference>
<dbReference type="RefSeq" id="WP_011007624.1">
    <property type="nucleotide sequence ID" value="NC_003364.1"/>
</dbReference>
<dbReference type="SMR" id="Q8ZY44"/>
<dbReference type="STRING" id="178306.PAE0952"/>
<dbReference type="EnsemblBacteria" id="AAL63152">
    <property type="protein sequence ID" value="AAL63152"/>
    <property type="gene ID" value="PAE0952"/>
</dbReference>
<dbReference type="GeneID" id="1465387"/>
<dbReference type="KEGG" id="pai:PAE0952"/>
<dbReference type="PATRIC" id="fig|178306.9.peg.705"/>
<dbReference type="eggNOG" id="arCOG00928">
    <property type="taxonomic scope" value="Archaea"/>
</dbReference>
<dbReference type="HOGENOM" id="CLU_095956_0_0_2"/>
<dbReference type="InParanoid" id="Q8ZY44"/>
<dbReference type="Proteomes" id="UP000002439">
    <property type="component" value="Chromosome"/>
</dbReference>
<dbReference type="Gene3D" id="3.30.2170.10">
    <property type="entry name" value="archaeoglobus fulgidus dsm 4304 superfamily"/>
    <property type="match status" value="1"/>
</dbReference>
<dbReference type="HAMAP" id="MF_00582">
    <property type="entry name" value="UPF0215"/>
    <property type="match status" value="1"/>
</dbReference>
<dbReference type="InterPro" id="IPR002802">
    <property type="entry name" value="Endo_dU"/>
</dbReference>
<dbReference type="PANTHER" id="PTHR39518">
    <property type="entry name" value="UPF0215 PROTEIN MJ1150"/>
    <property type="match status" value="1"/>
</dbReference>
<dbReference type="PANTHER" id="PTHR39518:SF2">
    <property type="entry name" value="UPF0215 PROTEIN MJ1150"/>
    <property type="match status" value="1"/>
</dbReference>
<dbReference type="Pfam" id="PF01949">
    <property type="entry name" value="DUF99"/>
    <property type="match status" value="1"/>
</dbReference>
<dbReference type="PIRSF" id="PIRSF006380">
    <property type="entry name" value="UCP006380"/>
    <property type="match status" value="1"/>
</dbReference>
<name>Y952_PYRAE</name>
<keyword id="KW-1185">Reference proteome</keyword>
<accession>Q8ZY44</accession>
<feature type="chain" id="PRO_0000149240" description="UPF0215 protein PAE0952">
    <location>
        <begin position="1"/>
        <end position="187"/>
    </location>
</feature>